<sequence>MKNIHQTAVVEDGARIGEDVKIEAYAFVSKDAVLGDNVTIKQGARVIGNTQIGDNSKIFSYAIVGDIPQDISYHDEENTGVIIGKNATIREFCTINSGTHKGDGLTRIGENAFIMAYCHIAHDCLIGNNIILANNATLAGHVELGDYAVVGGLTPIHQFVKVGESCMIAGASALSQDVVPFCLAEGNRAYIRSLNLVGIRRRFEKEQVEELVKAYKFLFNQGVSLKDQAGELFEKTNDTNVKKMCKFILETTRGIPLAKGRD</sequence>
<dbReference type="EC" id="2.3.1.129" evidence="1"/>
<dbReference type="EMBL" id="CP000767">
    <property type="protein sequence ID" value="EAU01222.1"/>
    <property type="molecule type" value="Genomic_DNA"/>
</dbReference>
<dbReference type="RefSeq" id="WP_011991782.1">
    <property type="nucleotide sequence ID" value="NC_009715.2"/>
</dbReference>
<dbReference type="SMR" id="A7GWE8"/>
<dbReference type="STRING" id="360105.CCV52592_0866"/>
<dbReference type="KEGG" id="ccv:CCV52592_0866"/>
<dbReference type="HOGENOM" id="CLU_061249_0_0_7"/>
<dbReference type="OrthoDB" id="9807278at2"/>
<dbReference type="UniPathway" id="UPA00359">
    <property type="reaction ID" value="UER00477"/>
</dbReference>
<dbReference type="Proteomes" id="UP000006380">
    <property type="component" value="Chromosome"/>
</dbReference>
<dbReference type="GO" id="GO:0005737">
    <property type="term" value="C:cytoplasm"/>
    <property type="evidence" value="ECO:0007669"/>
    <property type="project" value="UniProtKB-SubCell"/>
</dbReference>
<dbReference type="GO" id="GO:0016020">
    <property type="term" value="C:membrane"/>
    <property type="evidence" value="ECO:0007669"/>
    <property type="project" value="GOC"/>
</dbReference>
<dbReference type="GO" id="GO:0008780">
    <property type="term" value="F:acyl-[acyl-carrier-protein]-UDP-N-acetylglucosamine O-acyltransferase activity"/>
    <property type="evidence" value="ECO:0007669"/>
    <property type="project" value="UniProtKB-UniRule"/>
</dbReference>
<dbReference type="GO" id="GO:0009245">
    <property type="term" value="P:lipid A biosynthetic process"/>
    <property type="evidence" value="ECO:0007669"/>
    <property type="project" value="UniProtKB-UniRule"/>
</dbReference>
<dbReference type="CDD" id="cd03351">
    <property type="entry name" value="LbH_UDP-GlcNAc_AT"/>
    <property type="match status" value="1"/>
</dbReference>
<dbReference type="Gene3D" id="2.160.10.10">
    <property type="entry name" value="Hexapeptide repeat proteins"/>
    <property type="match status" value="1"/>
</dbReference>
<dbReference type="Gene3D" id="1.20.1180.10">
    <property type="entry name" value="Udp N-acetylglucosamine O-acyltransferase, C-terminal domain"/>
    <property type="match status" value="1"/>
</dbReference>
<dbReference type="HAMAP" id="MF_00387">
    <property type="entry name" value="LpxA"/>
    <property type="match status" value="1"/>
</dbReference>
<dbReference type="InterPro" id="IPR029098">
    <property type="entry name" value="Acetyltransf_C"/>
</dbReference>
<dbReference type="InterPro" id="IPR037157">
    <property type="entry name" value="Acetyltransf_C_sf"/>
</dbReference>
<dbReference type="InterPro" id="IPR001451">
    <property type="entry name" value="Hexapep"/>
</dbReference>
<dbReference type="InterPro" id="IPR018357">
    <property type="entry name" value="Hexapep_transf_CS"/>
</dbReference>
<dbReference type="InterPro" id="IPR010137">
    <property type="entry name" value="Lipid_A_LpxA"/>
</dbReference>
<dbReference type="InterPro" id="IPR011004">
    <property type="entry name" value="Trimer_LpxA-like_sf"/>
</dbReference>
<dbReference type="NCBIfam" id="TIGR01852">
    <property type="entry name" value="lipid_A_lpxA"/>
    <property type="match status" value="1"/>
</dbReference>
<dbReference type="NCBIfam" id="NF003657">
    <property type="entry name" value="PRK05289.1"/>
    <property type="match status" value="1"/>
</dbReference>
<dbReference type="PANTHER" id="PTHR43480">
    <property type="entry name" value="ACYL-[ACYL-CARRIER-PROTEIN]--UDP-N-ACETYLGLUCOSAMINE O-ACYLTRANSFERASE"/>
    <property type="match status" value="1"/>
</dbReference>
<dbReference type="PANTHER" id="PTHR43480:SF1">
    <property type="entry name" value="ACYL-[ACYL-CARRIER-PROTEIN]--UDP-N-ACETYLGLUCOSAMINE O-ACYLTRANSFERASE, MITOCHONDRIAL-RELATED"/>
    <property type="match status" value="1"/>
</dbReference>
<dbReference type="Pfam" id="PF13720">
    <property type="entry name" value="Acetyltransf_11"/>
    <property type="match status" value="1"/>
</dbReference>
<dbReference type="Pfam" id="PF00132">
    <property type="entry name" value="Hexapep"/>
    <property type="match status" value="2"/>
</dbReference>
<dbReference type="PIRSF" id="PIRSF000456">
    <property type="entry name" value="UDP-GlcNAc_acltr"/>
    <property type="match status" value="1"/>
</dbReference>
<dbReference type="SUPFAM" id="SSF51161">
    <property type="entry name" value="Trimeric LpxA-like enzymes"/>
    <property type="match status" value="1"/>
</dbReference>
<dbReference type="PROSITE" id="PS00101">
    <property type="entry name" value="HEXAPEP_TRANSFERASES"/>
    <property type="match status" value="1"/>
</dbReference>
<proteinExistence type="inferred from homology"/>
<organism>
    <name type="scientific">Campylobacter curvus (strain 525.92)</name>
    <dbReference type="NCBI Taxonomy" id="360105"/>
    <lineage>
        <taxon>Bacteria</taxon>
        <taxon>Pseudomonadati</taxon>
        <taxon>Campylobacterota</taxon>
        <taxon>Epsilonproteobacteria</taxon>
        <taxon>Campylobacterales</taxon>
        <taxon>Campylobacteraceae</taxon>
        <taxon>Campylobacter</taxon>
    </lineage>
</organism>
<evidence type="ECO:0000255" key="1">
    <source>
        <dbReference type="HAMAP-Rule" id="MF_00387"/>
    </source>
</evidence>
<name>LPXA_CAMC5</name>
<reference key="1">
    <citation type="submission" date="2007-07" db="EMBL/GenBank/DDBJ databases">
        <title>Genome sequence of Campylobacter curvus 525.92 isolated from human feces.</title>
        <authorList>
            <person name="Fouts D.E."/>
            <person name="Mongodin E.F."/>
            <person name="Puiu D."/>
            <person name="Sebastian Y."/>
            <person name="Miller W.G."/>
            <person name="Mandrell R.E."/>
            <person name="Lastovica A.J."/>
            <person name="Nelson K.E."/>
        </authorList>
    </citation>
    <scope>NUCLEOTIDE SEQUENCE [LARGE SCALE GENOMIC DNA]</scope>
    <source>
        <strain>525.92</strain>
    </source>
</reference>
<gene>
    <name evidence="1" type="primary">lpxA</name>
    <name type="ordered locus">Ccur92_02360</name>
    <name type="ORF">CCV52592_0866</name>
</gene>
<accession>A7GWE8</accession>
<keyword id="KW-0012">Acyltransferase</keyword>
<keyword id="KW-0963">Cytoplasm</keyword>
<keyword id="KW-0441">Lipid A biosynthesis</keyword>
<keyword id="KW-0444">Lipid biosynthesis</keyword>
<keyword id="KW-0443">Lipid metabolism</keyword>
<keyword id="KW-1185">Reference proteome</keyword>
<keyword id="KW-0677">Repeat</keyword>
<keyword id="KW-0808">Transferase</keyword>
<comment type="function">
    <text evidence="1">Involved in the biosynthesis of lipid A, a phosphorylated glycolipid that anchors the lipopolysaccharide to the outer membrane of the cell.</text>
</comment>
<comment type="catalytic activity">
    <reaction evidence="1">
        <text>a (3R)-hydroxyacyl-[ACP] + UDP-N-acetyl-alpha-D-glucosamine = a UDP-3-O-[(3R)-3-hydroxyacyl]-N-acetyl-alpha-D-glucosamine + holo-[ACP]</text>
        <dbReference type="Rhea" id="RHEA:67812"/>
        <dbReference type="Rhea" id="RHEA-COMP:9685"/>
        <dbReference type="Rhea" id="RHEA-COMP:9945"/>
        <dbReference type="ChEBI" id="CHEBI:57705"/>
        <dbReference type="ChEBI" id="CHEBI:64479"/>
        <dbReference type="ChEBI" id="CHEBI:78827"/>
        <dbReference type="ChEBI" id="CHEBI:173225"/>
        <dbReference type="EC" id="2.3.1.129"/>
    </reaction>
</comment>
<comment type="pathway">
    <text evidence="1">Glycolipid biosynthesis; lipid IV(A) biosynthesis; lipid IV(A) from (3R)-3-hydroxytetradecanoyl-[acyl-carrier-protein] and UDP-N-acetyl-alpha-D-glucosamine: step 1/6.</text>
</comment>
<comment type="subunit">
    <text evidence="1">Homotrimer.</text>
</comment>
<comment type="subcellular location">
    <subcellularLocation>
        <location evidence="1">Cytoplasm</location>
    </subcellularLocation>
</comment>
<comment type="similarity">
    <text evidence="1">Belongs to the transferase hexapeptide repeat family. LpxA subfamily.</text>
</comment>
<feature type="chain" id="PRO_1000013163" description="Acyl-[acyl-carrier-protein]--UDP-N-acetylglucosamine O-acyltransferase">
    <location>
        <begin position="1"/>
        <end position="262"/>
    </location>
</feature>
<protein>
    <recommendedName>
        <fullName evidence="1">Acyl-[acyl-carrier-protein]--UDP-N-acetylglucosamine O-acyltransferase</fullName>
        <shortName evidence="1">UDP-N-acetylglucosamine acyltransferase</shortName>
        <ecNumber evidence="1">2.3.1.129</ecNumber>
    </recommendedName>
</protein>